<dbReference type="EMBL" id="X17403">
    <property type="protein sequence ID" value="CAA35378.1"/>
    <property type="molecule type" value="Genomic_DNA"/>
</dbReference>
<dbReference type="PIR" id="S09826">
    <property type="entry name" value="S09826"/>
</dbReference>
<dbReference type="Proteomes" id="UP000008991">
    <property type="component" value="Segment"/>
</dbReference>
<gene>
    <name type="primary">UL63</name>
</gene>
<proteinExistence type="predicted"/>
<organismHost>
    <name type="scientific">Homo sapiens</name>
    <name type="common">Human</name>
    <dbReference type="NCBI Taxonomy" id="9606"/>
</organismHost>
<reference key="1">
    <citation type="journal article" date="1990" name="Curr. Top. Microbiol. Immunol.">
        <title>Analysis of the protein-coding content of the sequence of human cytomegalovirus strain AD169.</title>
        <authorList>
            <person name="Chee M.S."/>
            <person name="Bankier A.T."/>
            <person name="Beck S."/>
            <person name="Bohni R."/>
            <person name="Brown C.M."/>
            <person name="Cerny R."/>
            <person name="Horsnell T."/>
            <person name="Hutchison C.A. III"/>
            <person name="Kouzarides T."/>
            <person name="Martignetti J.A."/>
            <person name="Preddie E."/>
            <person name="Satchwell S.C."/>
            <person name="Tomlinson P."/>
            <person name="Weston K.M."/>
            <person name="Barrell B.G."/>
        </authorList>
    </citation>
    <scope>NUCLEOTIDE SEQUENCE [LARGE SCALE GENOMIC DNA]</scope>
</reference>
<organism>
    <name type="scientific">Human cytomegalovirus (strain AD169)</name>
    <name type="common">HHV-5</name>
    <name type="synonym">Human herpesvirus 5</name>
    <dbReference type="NCBI Taxonomy" id="10360"/>
    <lineage>
        <taxon>Viruses</taxon>
        <taxon>Duplodnaviria</taxon>
        <taxon>Heunggongvirae</taxon>
        <taxon>Peploviricota</taxon>
        <taxon>Herviviricetes</taxon>
        <taxon>Herpesvirales</taxon>
        <taxon>Orthoherpesviridae</taxon>
        <taxon>Betaherpesvirinae</taxon>
        <taxon>Cytomegalovirus</taxon>
        <taxon>Cytomegalovirus humanbeta5</taxon>
        <taxon>Human cytomegalovirus</taxon>
    </lineage>
</organism>
<accession>P16820</accession>
<name>UL63_HCMVA</name>
<feature type="chain" id="PRO_0000115333" description="Uncharacterized protein UL63">
    <location>
        <begin position="1"/>
        <end position="129"/>
    </location>
</feature>
<sequence>ISHQYHERPIALYTNLVILGQPPEKPTRDRAGAARTSRPIPPPVGDLHLFGKKLISLYVTYIYYTLCTPNCRCCIRRKNSPYLYRLNFCLIDTCLELCPPTFSLCITKICVSQKILRCLKTGETCVWVL</sequence>
<protein>
    <recommendedName>
        <fullName>Uncharacterized protein UL63</fullName>
    </recommendedName>
</protein>